<sequence>MAKRSGSGLQSSAGLMRYYEADKNAVHIQPKTVLIVGALAGIAVLFLSAVNGFWP</sequence>
<organism>
    <name type="scientific">Methanosarcina acetivorans (strain ATCC 35395 / DSM 2834 / JCM 12185 / C2A)</name>
    <dbReference type="NCBI Taxonomy" id="188937"/>
    <lineage>
        <taxon>Archaea</taxon>
        <taxon>Methanobacteriati</taxon>
        <taxon>Methanobacteriota</taxon>
        <taxon>Stenosarchaea group</taxon>
        <taxon>Methanomicrobia</taxon>
        <taxon>Methanosarcinales</taxon>
        <taxon>Methanosarcinaceae</taxon>
        <taxon>Methanosarcina</taxon>
    </lineage>
</organism>
<comment type="function">
    <text evidence="1">Involved in protein export. The function of the beta subunit is unknown, but it may be involved in stabilization of the trimeric complex (By similarity).</text>
</comment>
<comment type="subunit">
    <text evidence="1">Component of the protein translocase complex. Heterotrimer consisting of alpha (SecY), beta (SecG) and gamma (SecE) subunits. Can form oligomers of the heterotrimer (By similarity).</text>
</comment>
<comment type="subcellular location">
    <subcellularLocation>
        <location evidence="1">Cell membrane</location>
        <topology evidence="1">Single-pass membrane protein</topology>
    </subcellularLocation>
</comment>
<comment type="similarity">
    <text evidence="2">Belongs to the SEC61-beta family.</text>
</comment>
<proteinExistence type="inferred from homology"/>
<name>SECG_METAC</name>
<dbReference type="EMBL" id="AE010299">
    <property type="status" value="NOT_ANNOTATED_CDS"/>
    <property type="molecule type" value="Genomic_DNA"/>
</dbReference>
<dbReference type="RefSeq" id="WP_048064803.1">
    <property type="nucleotide sequence ID" value="NC_003552.1"/>
</dbReference>
<dbReference type="SMR" id="P60459"/>
<dbReference type="InParanoid" id="P60459"/>
<dbReference type="OrthoDB" id="43651at2157"/>
<dbReference type="PhylomeDB" id="P60459"/>
<dbReference type="Proteomes" id="UP000002487">
    <property type="component" value="Chromosome"/>
</dbReference>
<dbReference type="GO" id="GO:0005886">
    <property type="term" value="C:plasma membrane"/>
    <property type="evidence" value="ECO:0007669"/>
    <property type="project" value="UniProtKB-SubCell"/>
</dbReference>
<dbReference type="GO" id="GO:0015031">
    <property type="term" value="P:protein transport"/>
    <property type="evidence" value="ECO:0007669"/>
    <property type="project" value="UniProtKB-UniRule"/>
</dbReference>
<dbReference type="HAMAP" id="MF_00751">
    <property type="entry name" value="SecG"/>
    <property type="match status" value="1"/>
</dbReference>
<dbReference type="InterPro" id="IPR023531">
    <property type="entry name" value="Preprot_translocase_SecG"/>
</dbReference>
<dbReference type="InterPro" id="IPR016482">
    <property type="entry name" value="SecG/Sec61-beta/Sbh"/>
</dbReference>
<dbReference type="NCBIfam" id="NF002318">
    <property type="entry name" value="PRK01253.1"/>
    <property type="match status" value="1"/>
</dbReference>
<dbReference type="Pfam" id="PF03911">
    <property type="entry name" value="Sec61_beta"/>
    <property type="match status" value="1"/>
</dbReference>
<gene>
    <name type="primary">secG</name>
    <name type="ordered locus">MA_0076.1</name>
</gene>
<reference key="1">
    <citation type="journal article" date="2002" name="Genome Res.">
        <title>The genome of Methanosarcina acetivorans reveals extensive metabolic and physiological diversity.</title>
        <authorList>
            <person name="Galagan J.E."/>
            <person name="Nusbaum C."/>
            <person name="Roy A."/>
            <person name="Endrizzi M.G."/>
            <person name="Macdonald P."/>
            <person name="FitzHugh W."/>
            <person name="Calvo S."/>
            <person name="Engels R."/>
            <person name="Smirnov S."/>
            <person name="Atnoor D."/>
            <person name="Brown A."/>
            <person name="Allen N."/>
            <person name="Naylor J."/>
            <person name="Stange-Thomann N."/>
            <person name="DeArellano K."/>
            <person name="Johnson R."/>
            <person name="Linton L."/>
            <person name="McEwan P."/>
            <person name="McKernan K."/>
            <person name="Talamas J."/>
            <person name="Tirrell A."/>
            <person name="Ye W."/>
            <person name="Zimmer A."/>
            <person name="Barber R.D."/>
            <person name="Cann I."/>
            <person name="Graham D.E."/>
            <person name="Grahame D.A."/>
            <person name="Guss A.M."/>
            <person name="Hedderich R."/>
            <person name="Ingram-Smith C."/>
            <person name="Kuettner H.C."/>
            <person name="Krzycki J.A."/>
            <person name="Leigh J.A."/>
            <person name="Li W."/>
            <person name="Liu J."/>
            <person name="Mukhopadhyay B."/>
            <person name="Reeve J.N."/>
            <person name="Smith K."/>
            <person name="Springer T.A."/>
            <person name="Umayam L.A."/>
            <person name="White O."/>
            <person name="White R.H."/>
            <person name="de Macario E.C."/>
            <person name="Ferry J.G."/>
            <person name="Jarrell K.F."/>
            <person name="Jing H."/>
            <person name="Macario A.J.L."/>
            <person name="Paulsen I.T."/>
            <person name="Pritchett M."/>
            <person name="Sowers K.R."/>
            <person name="Swanson R.V."/>
            <person name="Zinder S.H."/>
            <person name="Lander E."/>
            <person name="Metcalf W.W."/>
            <person name="Birren B."/>
        </authorList>
    </citation>
    <scope>NUCLEOTIDE SEQUENCE [LARGE SCALE GENOMIC DNA]</scope>
    <source>
        <strain>ATCC 35395 / DSM 2834 / JCM 12185 / C2A</strain>
    </source>
</reference>
<feature type="chain" id="PRO_0000157267" description="Preprotein translocase subunit SecG">
    <location>
        <begin position="1"/>
        <end position="55"/>
    </location>
</feature>
<feature type="topological domain" description="Cytoplasmic" evidence="1">
    <location>
        <begin position="1"/>
        <end position="29"/>
    </location>
</feature>
<feature type="transmembrane region" description="Helical" evidence="1">
    <location>
        <begin position="30"/>
        <end position="49"/>
    </location>
</feature>
<feature type="topological domain" description="Extracellular" evidence="1">
    <location>
        <begin position="50"/>
        <end position="55"/>
    </location>
</feature>
<accession>P60459</accession>
<evidence type="ECO:0000250" key="1"/>
<evidence type="ECO:0000305" key="2"/>
<keyword id="KW-1003">Cell membrane</keyword>
<keyword id="KW-0472">Membrane</keyword>
<keyword id="KW-0653">Protein transport</keyword>
<keyword id="KW-1185">Reference proteome</keyword>
<keyword id="KW-0811">Translocation</keyword>
<keyword id="KW-0812">Transmembrane</keyword>
<keyword id="KW-1133">Transmembrane helix</keyword>
<keyword id="KW-0813">Transport</keyword>
<protein>
    <recommendedName>
        <fullName>Preprotein translocase subunit SecG</fullName>
    </recommendedName>
    <alternativeName>
        <fullName>Protein transport protein Sec61 subunit beta homolog</fullName>
    </alternativeName>
</protein>